<proteinExistence type="evidence at transcript level"/>
<comment type="function">
    <text evidence="3">Neuroendocrine peptide which is produced by a subset of neurons in the hypothalamus. Activates the G-protein coupled receptors pth1ra, pth1rb and pth2r with similar affinity. Receptor binding stimulates intracellular cAMP production. Plays a role in bone mineralization by regulating expression of factors involved in phosphate homeostasis. Important for embryonic bone development.</text>
</comment>
<comment type="subcellular location">
    <subcellularLocation>
        <location evidence="6">Secreted</location>
    </subcellularLocation>
</comment>
<comment type="tissue specificity">
    <text evidence="3">Specifically expressed in a bilateral cluster of neurons in the dorsal region of the periventricular hypothalamus. Their axons project through the midbrain and hindbrain and down the spinal cord.</text>
</comment>
<comment type="developmental stage">
    <text evidence="3">Detected at 0-3 hours post-fertilization (hpf), probably due to inheritance of maternal transcripts. Expression then declines, and increases again from 12 hpf onwards. Detected in the developing hypothalamus from 24 hpf. At 3 days post-fertilization (dpf), found in two subsets of neurons in the lateral hypothalamus.</text>
</comment>
<comment type="induction">
    <text evidence="3">Up-regulated by runx2a.</text>
</comment>
<comment type="similarity">
    <text evidence="5">Belongs to the parathyroid hormone family.</text>
</comment>
<dbReference type="EMBL" id="KT182088">
    <property type="protein sequence ID" value="ANW35450.1"/>
    <property type="molecule type" value="mRNA"/>
</dbReference>
<dbReference type="EMBL" id="CU856139">
    <property type="status" value="NOT_ANNOTATED_CDS"/>
    <property type="molecule type" value="Genomic_DNA"/>
</dbReference>
<dbReference type="SMR" id="A0A1L2F565"/>
<dbReference type="FunCoup" id="A0A1L2F565">
    <property type="interactions" value="4"/>
</dbReference>
<dbReference type="STRING" id="7955.ENSDARP00000144118"/>
<dbReference type="Ensembl" id="ENSDART00000179067">
    <property type="protein sequence ID" value="ENSDARP00000144118"/>
    <property type="gene ID" value="ENSDARG00000106914"/>
</dbReference>
<dbReference type="AGR" id="ZFIN:ZDB-GENE-180611-1"/>
<dbReference type="ZFIN" id="ZDB-GENE-180611-1">
    <property type="gene designation" value="pth4"/>
</dbReference>
<dbReference type="InParanoid" id="A0A1L2F565"/>
<dbReference type="OMA" id="THCQENE"/>
<dbReference type="PRO" id="PR:A0A1L2F565"/>
<dbReference type="Proteomes" id="UP000000437">
    <property type="component" value="Unplaced"/>
</dbReference>
<dbReference type="Bgee" id="ENSDARG00000106914">
    <property type="expression patterns" value="Expressed in dorsal periventricular hypothalamus and 6 other cell types or tissues"/>
</dbReference>
<dbReference type="GO" id="GO:0005576">
    <property type="term" value="C:extracellular region"/>
    <property type="evidence" value="ECO:0007669"/>
    <property type="project" value="UniProtKB-SubCell"/>
</dbReference>
<dbReference type="GO" id="GO:0005179">
    <property type="term" value="F:hormone activity"/>
    <property type="evidence" value="ECO:0000318"/>
    <property type="project" value="GO_Central"/>
</dbReference>
<dbReference type="GO" id="GO:0051428">
    <property type="term" value="F:peptide hormone receptor binding"/>
    <property type="evidence" value="ECO:0000318"/>
    <property type="project" value="GO_Central"/>
</dbReference>
<dbReference type="GO" id="GO:0007189">
    <property type="term" value="P:adenylate cyclase-activating G protein-coupled receptor signaling pathway"/>
    <property type="evidence" value="ECO:0000318"/>
    <property type="project" value="GO_Central"/>
</dbReference>
<dbReference type="GO" id="GO:0030282">
    <property type="term" value="P:bone mineralization"/>
    <property type="evidence" value="ECO:0007669"/>
    <property type="project" value="InterPro"/>
</dbReference>
<dbReference type="GO" id="GO:0007218">
    <property type="term" value="P:neuropeptide signaling pathway"/>
    <property type="evidence" value="ECO:0007669"/>
    <property type="project" value="UniProtKB-KW"/>
</dbReference>
<dbReference type="GO" id="GO:0002076">
    <property type="term" value="P:osteoblast development"/>
    <property type="evidence" value="ECO:0000318"/>
    <property type="project" value="GO_Central"/>
</dbReference>
<dbReference type="GO" id="GO:0030500">
    <property type="term" value="P:regulation of bone mineralization"/>
    <property type="evidence" value="ECO:0000315"/>
    <property type="project" value="ZFIN"/>
</dbReference>
<dbReference type="GO" id="GO:0032330">
    <property type="term" value="P:regulation of chondrocyte differentiation"/>
    <property type="evidence" value="ECO:0000318"/>
    <property type="project" value="GO_Central"/>
</dbReference>
<dbReference type="InterPro" id="IPR003626">
    <property type="entry name" value="PTH-rel"/>
</dbReference>
<dbReference type="InterPro" id="IPR001415">
    <property type="entry name" value="PTH/PTH-rel"/>
</dbReference>
<dbReference type="PANTHER" id="PTHR17223">
    <property type="entry name" value="PARATHYROID HORMONE-RELATED"/>
    <property type="match status" value="1"/>
</dbReference>
<dbReference type="PANTHER" id="PTHR17223:SF0">
    <property type="entry name" value="PARATHYROID HORMONE-RELATED PROTEIN"/>
    <property type="match status" value="1"/>
</dbReference>
<dbReference type="Pfam" id="PF01279">
    <property type="entry name" value="Parathyroid"/>
    <property type="match status" value="1"/>
</dbReference>
<dbReference type="SMART" id="SM00087">
    <property type="entry name" value="PTH"/>
    <property type="match status" value="1"/>
</dbReference>
<protein>
    <recommendedName>
        <fullName evidence="6">Parathyroid hormone 4</fullName>
    </recommendedName>
</protein>
<accession>A0A1L2F565</accession>
<accession>A0A286YAB1</accession>
<organism evidence="7">
    <name type="scientific">Danio rerio</name>
    <name type="common">Zebrafish</name>
    <name type="synonym">Brachydanio rerio</name>
    <dbReference type="NCBI Taxonomy" id="7955"/>
    <lineage>
        <taxon>Eukaryota</taxon>
        <taxon>Metazoa</taxon>
        <taxon>Chordata</taxon>
        <taxon>Craniata</taxon>
        <taxon>Vertebrata</taxon>
        <taxon>Euteleostomi</taxon>
        <taxon>Actinopterygii</taxon>
        <taxon>Neopterygii</taxon>
        <taxon>Teleostei</taxon>
        <taxon>Ostariophysi</taxon>
        <taxon>Cypriniformes</taxon>
        <taxon>Danionidae</taxon>
        <taxon>Danioninae</taxon>
        <taxon>Danio</taxon>
    </lineage>
</organism>
<name>PTH4_DANRE</name>
<gene>
    <name evidence="4" type="primary">pth4</name>
</gene>
<sequence>MLKMQRSQQRVALMMLMVVAAVHCQESESRRAVTEHQLMHDRGRSIQSLKRLIWLSSAIEGLHTAQARTLEPDSRWRSRGAQLYSQPGREESSGGQKRALETLLSDLYRAHLTFGLGEPEK</sequence>
<feature type="signal peptide" evidence="1">
    <location>
        <begin position="1"/>
        <end position="24"/>
    </location>
</feature>
<feature type="propeptide" id="PRO_0000443086" evidence="5">
    <location>
        <begin position="25"/>
        <end position="29"/>
    </location>
</feature>
<feature type="peptide" id="PRO_0000443087" description="Parathyroid hormone 4" evidence="5">
    <location>
        <begin position="32"/>
        <end position="121"/>
    </location>
</feature>
<feature type="region of interest" description="Disordered" evidence="2">
    <location>
        <begin position="77"/>
        <end position="97"/>
    </location>
</feature>
<keyword id="KW-0165">Cleavage on pair of basic residues</keyword>
<keyword id="KW-0372">Hormone</keyword>
<keyword id="KW-0527">Neuropeptide</keyword>
<keyword id="KW-1185">Reference proteome</keyword>
<keyword id="KW-0964">Secreted</keyword>
<keyword id="KW-0732">Signal</keyword>
<evidence type="ECO:0000255" key="1"/>
<evidence type="ECO:0000256" key="2">
    <source>
        <dbReference type="SAM" id="MobiDB-lite"/>
    </source>
</evidence>
<evidence type="ECO:0000269" key="3">
    <source>
    </source>
</evidence>
<evidence type="ECO:0000303" key="4">
    <source>
    </source>
</evidence>
<evidence type="ECO:0000305" key="5"/>
<evidence type="ECO:0000305" key="6">
    <source>
    </source>
</evidence>
<evidence type="ECO:0000312" key="7">
    <source>
        <dbReference type="EMBL" id="ANW35450.1"/>
    </source>
</evidence>
<evidence type="ECO:0000312" key="8">
    <source>
        <dbReference type="Proteomes" id="UP000000437"/>
    </source>
</evidence>
<reference evidence="7" key="1">
    <citation type="journal article" date="2017" name="FASEB J.">
        <title>Pth4, an ancient parathyroid hormone lost in eutherian mammals, reveals a new brain-to-bone signaling pathway.</title>
        <authorList>
            <person name="Suarez-Bregua P."/>
            <person name="Torres-Nunez E."/>
            <person name="Saxena A."/>
            <person name="Guerreiro P."/>
            <person name="Braasch I."/>
            <person name="Prober D.A."/>
            <person name="Moran P."/>
            <person name="Cerda-Reverter J.M."/>
            <person name="Du S.J."/>
            <person name="Adrio F."/>
            <person name="Power D.M."/>
            <person name="Canario A.V."/>
            <person name="Postlethwait J.H."/>
            <person name="Bronner M.E."/>
            <person name="Canestro C."/>
            <person name="Rotllant J."/>
        </authorList>
    </citation>
    <scope>NUCLEOTIDE SEQUENCE [MRNA]</scope>
    <scope>FUNCTION</scope>
    <scope>SUBCELLULAR LOCATION</scope>
    <scope>TISSUE SPECIFICITY</scope>
    <scope>DEVELOPMENTAL STAGE</scope>
    <scope>INDUCTION</scope>
</reference>
<reference evidence="8" key="2">
    <citation type="journal article" date="2013" name="Nature">
        <title>The zebrafish reference genome sequence and its relationship to the human genome.</title>
        <authorList>
            <person name="Howe K."/>
            <person name="Clark M.D."/>
            <person name="Torroja C.F."/>
            <person name="Torrance J."/>
            <person name="Berthelot C."/>
            <person name="Muffato M."/>
            <person name="Collins J.E."/>
            <person name="Humphray S."/>
            <person name="McLaren K."/>
            <person name="Matthews L."/>
            <person name="McLaren S."/>
            <person name="Sealy I."/>
            <person name="Caccamo M."/>
            <person name="Churcher C."/>
            <person name="Scott C."/>
            <person name="Barrett J.C."/>
            <person name="Koch R."/>
            <person name="Rauch G.J."/>
            <person name="White S."/>
            <person name="Chow W."/>
            <person name="Kilian B."/>
            <person name="Quintais L.T."/>
            <person name="Guerra-Assuncao J.A."/>
            <person name="Zhou Y."/>
            <person name="Gu Y."/>
            <person name="Yen J."/>
            <person name="Vogel J.H."/>
            <person name="Eyre T."/>
            <person name="Redmond S."/>
            <person name="Banerjee R."/>
            <person name="Chi J."/>
            <person name="Fu B."/>
            <person name="Langley E."/>
            <person name="Maguire S.F."/>
            <person name="Laird G.K."/>
            <person name="Lloyd D."/>
            <person name="Kenyon E."/>
            <person name="Donaldson S."/>
            <person name="Sehra H."/>
            <person name="Almeida-King J."/>
            <person name="Loveland J."/>
            <person name="Trevanion S."/>
            <person name="Jones M."/>
            <person name="Quail M."/>
            <person name="Willey D."/>
            <person name="Hunt A."/>
            <person name="Burton J."/>
            <person name="Sims S."/>
            <person name="McLay K."/>
            <person name="Plumb B."/>
            <person name="Davis J."/>
            <person name="Clee C."/>
            <person name="Oliver K."/>
            <person name="Clark R."/>
            <person name="Riddle C."/>
            <person name="Elliot D."/>
            <person name="Threadgold G."/>
            <person name="Harden G."/>
            <person name="Ware D."/>
            <person name="Begum S."/>
            <person name="Mortimore B."/>
            <person name="Kerry G."/>
            <person name="Heath P."/>
            <person name="Phillimore B."/>
            <person name="Tracey A."/>
            <person name="Corby N."/>
            <person name="Dunn M."/>
            <person name="Johnson C."/>
            <person name="Wood J."/>
            <person name="Clark S."/>
            <person name="Pelan S."/>
            <person name="Griffiths G."/>
            <person name="Smith M."/>
            <person name="Glithero R."/>
            <person name="Howden P."/>
            <person name="Barker N."/>
            <person name="Lloyd C."/>
            <person name="Stevens C."/>
            <person name="Harley J."/>
            <person name="Holt K."/>
            <person name="Panagiotidis G."/>
            <person name="Lovell J."/>
            <person name="Beasley H."/>
            <person name="Henderson C."/>
            <person name="Gordon D."/>
            <person name="Auger K."/>
            <person name="Wright D."/>
            <person name="Collins J."/>
            <person name="Raisen C."/>
            <person name="Dyer L."/>
            <person name="Leung K."/>
            <person name="Robertson L."/>
            <person name="Ambridge K."/>
            <person name="Leongamornlert D."/>
            <person name="McGuire S."/>
            <person name="Gilderthorp R."/>
            <person name="Griffiths C."/>
            <person name="Manthravadi D."/>
            <person name="Nichol S."/>
            <person name="Barker G."/>
            <person name="Whitehead S."/>
            <person name="Kay M."/>
            <person name="Brown J."/>
            <person name="Murnane C."/>
            <person name="Gray E."/>
            <person name="Humphries M."/>
            <person name="Sycamore N."/>
            <person name="Barker D."/>
            <person name="Saunders D."/>
            <person name="Wallis J."/>
            <person name="Babbage A."/>
            <person name="Hammond S."/>
            <person name="Mashreghi-Mohammadi M."/>
            <person name="Barr L."/>
            <person name="Martin S."/>
            <person name="Wray P."/>
            <person name="Ellington A."/>
            <person name="Matthews N."/>
            <person name="Ellwood M."/>
            <person name="Woodmansey R."/>
            <person name="Clark G."/>
            <person name="Cooper J."/>
            <person name="Tromans A."/>
            <person name="Grafham D."/>
            <person name="Skuce C."/>
            <person name="Pandian R."/>
            <person name="Andrews R."/>
            <person name="Harrison E."/>
            <person name="Kimberley A."/>
            <person name="Garnett J."/>
            <person name="Fosker N."/>
            <person name="Hall R."/>
            <person name="Garner P."/>
            <person name="Kelly D."/>
            <person name="Bird C."/>
            <person name="Palmer S."/>
            <person name="Gehring I."/>
            <person name="Berger A."/>
            <person name="Dooley C.M."/>
            <person name="Ersan-Urun Z."/>
            <person name="Eser C."/>
            <person name="Geiger H."/>
            <person name="Geisler M."/>
            <person name="Karotki L."/>
            <person name="Kirn A."/>
            <person name="Konantz J."/>
            <person name="Konantz M."/>
            <person name="Oberlander M."/>
            <person name="Rudolph-Geiger S."/>
            <person name="Teucke M."/>
            <person name="Lanz C."/>
            <person name="Raddatz G."/>
            <person name="Osoegawa K."/>
            <person name="Zhu B."/>
            <person name="Rapp A."/>
            <person name="Widaa S."/>
            <person name="Langford C."/>
            <person name="Yang F."/>
            <person name="Schuster S.C."/>
            <person name="Carter N.P."/>
            <person name="Harrow J."/>
            <person name="Ning Z."/>
            <person name="Herrero J."/>
            <person name="Searle S.M."/>
            <person name="Enright A."/>
            <person name="Geisler R."/>
            <person name="Plasterk R.H."/>
            <person name="Lee C."/>
            <person name="Westerfield M."/>
            <person name="de Jong P.J."/>
            <person name="Zon L.I."/>
            <person name="Postlethwait J.H."/>
            <person name="Nusslein-Volhard C."/>
            <person name="Hubbard T.J."/>
            <person name="Roest Crollius H."/>
            <person name="Rogers J."/>
            <person name="Stemple D.L."/>
        </authorList>
    </citation>
    <scope>NUCLEOTIDE SEQUENCE [LARGE SCALE GENOMIC DNA]</scope>
    <source>
        <strain evidence="8">Tuebingen</strain>
    </source>
</reference>